<accession>Q5RB63</accession>
<protein>
    <recommendedName>
        <fullName>17S U2 SnRNP complex component HTATSF1</fullName>
    </recommendedName>
    <alternativeName>
        <fullName>HIV Tat-specific factor 1 homolog</fullName>
    </alternativeName>
</protein>
<dbReference type="EMBL" id="CR858792">
    <property type="protein sequence ID" value="CAH90997.1"/>
    <property type="molecule type" value="mRNA"/>
</dbReference>
<dbReference type="RefSeq" id="NP_001125576.1">
    <property type="nucleotide sequence ID" value="NM_001132104.1"/>
</dbReference>
<dbReference type="RefSeq" id="XP_024096063.1">
    <property type="nucleotide sequence ID" value="XM_024240295.3"/>
</dbReference>
<dbReference type="RefSeq" id="XP_054399985.1">
    <property type="nucleotide sequence ID" value="XM_054544010.2"/>
</dbReference>
<dbReference type="SMR" id="Q5RB63"/>
<dbReference type="FunCoup" id="Q5RB63">
    <property type="interactions" value="2346"/>
</dbReference>
<dbReference type="STRING" id="9601.ENSPPYP00000023249"/>
<dbReference type="Ensembl" id="ENSPPYT00000024220.3">
    <property type="protein sequence ID" value="ENSPPYP00000023249.3"/>
    <property type="gene ID" value="ENSPPYG00000020765.3"/>
</dbReference>
<dbReference type="GeneID" id="100172491"/>
<dbReference type="KEGG" id="pon:100172491"/>
<dbReference type="CTD" id="27336"/>
<dbReference type="eggNOG" id="KOG1548">
    <property type="taxonomic scope" value="Eukaryota"/>
</dbReference>
<dbReference type="GeneTree" id="ENSGT00390000009902"/>
<dbReference type="InParanoid" id="Q5RB63"/>
<dbReference type="OMA" id="CAKFGQI"/>
<dbReference type="OrthoDB" id="10258585at2759"/>
<dbReference type="Proteomes" id="UP000001595">
    <property type="component" value="Chromosome X"/>
</dbReference>
<dbReference type="GO" id="GO:0005654">
    <property type="term" value="C:nucleoplasm"/>
    <property type="evidence" value="ECO:0007669"/>
    <property type="project" value="Ensembl"/>
</dbReference>
<dbReference type="GO" id="GO:0035861">
    <property type="term" value="C:site of double-strand break"/>
    <property type="evidence" value="ECO:0000250"/>
    <property type="project" value="UniProtKB"/>
</dbReference>
<dbReference type="GO" id="GO:0005686">
    <property type="term" value="C:U2 snRNP"/>
    <property type="evidence" value="ECO:0007669"/>
    <property type="project" value="TreeGrafter"/>
</dbReference>
<dbReference type="GO" id="GO:0005684">
    <property type="term" value="C:U2-type spliceosomal complex"/>
    <property type="evidence" value="ECO:0000250"/>
    <property type="project" value="UniProtKB"/>
</dbReference>
<dbReference type="GO" id="GO:0140463">
    <property type="term" value="F:chromatin-protein adaptor activity"/>
    <property type="evidence" value="ECO:0000250"/>
    <property type="project" value="UniProtKB"/>
</dbReference>
<dbReference type="GO" id="GO:0160004">
    <property type="term" value="F:poly-ADP-D-ribose modification-dependent protein binding"/>
    <property type="evidence" value="ECO:0000250"/>
    <property type="project" value="UniProtKB"/>
</dbReference>
<dbReference type="GO" id="GO:0003723">
    <property type="term" value="F:RNA binding"/>
    <property type="evidence" value="ECO:0007669"/>
    <property type="project" value="UniProtKB-KW"/>
</dbReference>
<dbReference type="GO" id="GO:0000724">
    <property type="term" value="P:double-strand break repair via homologous recombination"/>
    <property type="evidence" value="ECO:0000250"/>
    <property type="project" value="UniProtKB"/>
</dbReference>
<dbReference type="GO" id="GO:0000398">
    <property type="term" value="P:mRNA splicing, via spliceosome"/>
    <property type="evidence" value="ECO:0000250"/>
    <property type="project" value="UniProtKB"/>
</dbReference>
<dbReference type="GO" id="GO:1990166">
    <property type="term" value="P:protein localization to site of double-strand break"/>
    <property type="evidence" value="ECO:0000250"/>
    <property type="project" value="UniProtKB"/>
</dbReference>
<dbReference type="GO" id="GO:1903241">
    <property type="term" value="P:U2-type prespliceosome assembly"/>
    <property type="evidence" value="ECO:0000250"/>
    <property type="project" value="UniProtKB"/>
</dbReference>
<dbReference type="CDD" id="cd12281">
    <property type="entry name" value="RRM1_TatSF1_like"/>
    <property type="match status" value="1"/>
</dbReference>
<dbReference type="CDD" id="cd12282">
    <property type="entry name" value="RRM2_TatSF1_like"/>
    <property type="match status" value="1"/>
</dbReference>
<dbReference type="FunFam" id="3.30.70.330:FF:000202">
    <property type="entry name" value="HIV Tat-specific factor 1"/>
    <property type="match status" value="1"/>
</dbReference>
<dbReference type="FunFam" id="3.30.70.330:FF:000105">
    <property type="entry name" value="HIV Tat-specific factor 1 homolog"/>
    <property type="match status" value="1"/>
</dbReference>
<dbReference type="Gene3D" id="3.30.70.330">
    <property type="match status" value="2"/>
</dbReference>
<dbReference type="InterPro" id="IPR012677">
    <property type="entry name" value="Nucleotide-bd_a/b_plait_sf"/>
</dbReference>
<dbReference type="InterPro" id="IPR035979">
    <property type="entry name" value="RBD_domain_sf"/>
</dbReference>
<dbReference type="InterPro" id="IPR000504">
    <property type="entry name" value="RRM_dom"/>
</dbReference>
<dbReference type="InterPro" id="IPR034393">
    <property type="entry name" value="TatSF1-like"/>
</dbReference>
<dbReference type="InterPro" id="IPR034392">
    <property type="entry name" value="TatSF1-like_RRM1"/>
</dbReference>
<dbReference type="PANTHER" id="PTHR15608:SF0">
    <property type="entry name" value="HIV TAT-SPECIFIC FACTOR 1"/>
    <property type="match status" value="1"/>
</dbReference>
<dbReference type="PANTHER" id="PTHR15608">
    <property type="entry name" value="SPLICING FACTOR U2AF-ASSOCIATED PROTEIN 2"/>
    <property type="match status" value="1"/>
</dbReference>
<dbReference type="Pfam" id="PF00076">
    <property type="entry name" value="RRM_1"/>
    <property type="match status" value="2"/>
</dbReference>
<dbReference type="SMART" id="SM00360">
    <property type="entry name" value="RRM"/>
    <property type="match status" value="2"/>
</dbReference>
<dbReference type="SUPFAM" id="SSF54928">
    <property type="entry name" value="RNA-binding domain, RBD"/>
    <property type="match status" value="1"/>
</dbReference>
<dbReference type="PROSITE" id="PS50102">
    <property type="entry name" value="RRM"/>
    <property type="match status" value="2"/>
</dbReference>
<gene>
    <name type="primary">HTATSF1</name>
</gene>
<keyword id="KW-0007">Acetylation</keyword>
<keyword id="KW-0010">Activator</keyword>
<keyword id="KW-0158">Chromosome</keyword>
<keyword id="KW-0227">DNA damage</keyword>
<keyword id="KW-0234">DNA repair</keyword>
<keyword id="KW-1017">Isopeptide bond</keyword>
<keyword id="KW-0507">mRNA processing</keyword>
<keyword id="KW-0508">mRNA splicing</keyword>
<keyword id="KW-0539">Nucleus</keyword>
<keyword id="KW-0597">Phosphoprotein</keyword>
<keyword id="KW-1185">Reference proteome</keyword>
<keyword id="KW-0677">Repeat</keyword>
<keyword id="KW-0694">RNA-binding</keyword>
<keyword id="KW-0747">Spliceosome</keyword>
<keyword id="KW-0804">Transcription</keyword>
<keyword id="KW-0805">Transcription regulation</keyword>
<keyword id="KW-0832">Ubl conjugation</keyword>
<feature type="initiator methionine" description="Removed" evidence="1">
    <location>
        <position position="1"/>
    </location>
</feature>
<feature type="chain" id="PRO_0000248606" description="17S U2 SnRNP complex component HTATSF1">
    <location>
        <begin position="2"/>
        <end position="754"/>
    </location>
</feature>
<feature type="domain" description="RRM 1" evidence="3">
    <location>
        <begin position="133"/>
        <end position="218"/>
    </location>
</feature>
<feature type="domain" description="RRM 2" evidence="3">
    <location>
        <begin position="264"/>
        <end position="349"/>
    </location>
</feature>
<feature type="region of interest" description="Disordered" evidence="4">
    <location>
        <begin position="1"/>
        <end position="53"/>
    </location>
</feature>
<feature type="region of interest" description="Disordered" evidence="4">
    <location>
        <begin position="81"/>
        <end position="122"/>
    </location>
</feature>
<feature type="region of interest" description="U2AF homology motif (UHM)" evidence="1">
    <location>
        <begin position="259"/>
        <end position="353"/>
    </location>
</feature>
<feature type="region of interest" description="Disordered" evidence="4">
    <location>
        <begin position="380"/>
        <end position="415"/>
    </location>
</feature>
<feature type="region of interest" description="Mediates interaction with the P-TEFb complex" evidence="1">
    <location>
        <begin position="381"/>
        <end position="754"/>
    </location>
</feature>
<feature type="region of interest" description="Disordered" evidence="4">
    <location>
        <begin position="433"/>
        <end position="754"/>
    </location>
</feature>
<feature type="compositionally biased region" description="Basic and acidic residues" evidence="4">
    <location>
        <begin position="90"/>
        <end position="122"/>
    </location>
</feature>
<feature type="compositionally biased region" description="Polar residues" evidence="4">
    <location>
        <begin position="405"/>
        <end position="415"/>
    </location>
</feature>
<feature type="compositionally biased region" description="Basic and acidic residues" evidence="4">
    <location>
        <begin position="462"/>
        <end position="476"/>
    </location>
</feature>
<feature type="compositionally biased region" description="Basic and acidic residues" evidence="4">
    <location>
        <begin position="508"/>
        <end position="538"/>
    </location>
</feature>
<feature type="compositionally biased region" description="Acidic residues" evidence="4">
    <location>
        <begin position="539"/>
        <end position="552"/>
    </location>
</feature>
<feature type="compositionally biased region" description="Basic and acidic residues" evidence="4">
    <location>
        <begin position="553"/>
        <end position="563"/>
    </location>
</feature>
<feature type="compositionally biased region" description="Acidic residues" evidence="4">
    <location>
        <begin position="564"/>
        <end position="579"/>
    </location>
</feature>
<feature type="compositionally biased region" description="Basic and acidic residues" evidence="4">
    <location>
        <begin position="580"/>
        <end position="590"/>
    </location>
</feature>
<feature type="compositionally biased region" description="Acidic residues" evidence="4">
    <location>
        <begin position="591"/>
        <end position="606"/>
    </location>
</feature>
<feature type="compositionally biased region" description="Acidic residues" evidence="4">
    <location>
        <begin position="613"/>
        <end position="633"/>
    </location>
</feature>
<feature type="compositionally biased region" description="Acidic residues" evidence="4">
    <location>
        <begin position="640"/>
        <end position="651"/>
    </location>
</feature>
<feature type="compositionally biased region" description="Basic and acidic residues" evidence="4">
    <location>
        <begin position="652"/>
        <end position="674"/>
    </location>
</feature>
<feature type="compositionally biased region" description="Acidic residues" evidence="4">
    <location>
        <begin position="675"/>
        <end position="713"/>
    </location>
</feature>
<feature type="compositionally biased region" description="Basic and acidic residues" evidence="4">
    <location>
        <begin position="714"/>
        <end position="725"/>
    </location>
</feature>
<feature type="modified residue" description="N-acetylserine" evidence="1">
    <location>
        <position position="2"/>
    </location>
</feature>
<feature type="modified residue" description="N6-acetyllysine" evidence="2">
    <location>
        <position position="297"/>
    </location>
</feature>
<feature type="modified residue" description="Phosphoserine" evidence="1">
    <location>
        <position position="387"/>
    </location>
</feature>
<feature type="modified residue" description="Phosphoserine" evidence="1">
    <location>
        <position position="403"/>
    </location>
</feature>
<feature type="modified residue" description="Phosphoserine" evidence="1">
    <location>
        <position position="407"/>
    </location>
</feature>
<feature type="modified residue" description="Phosphoserine" evidence="2">
    <location>
        <position position="409"/>
    </location>
</feature>
<feature type="modified residue" description="Phosphoserine" evidence="1">
    <location>
        <position position="445"/>
    </location>
</feature>
<feature type="modified residue" description="Phosphoserine" evidence="1">
    <location>
        <position position="452"/>
    </location>
</feature>
<feature type="modified residue" description="Phosphoserine" evidence="1">
    <location>
        <position position="453"/>
    </location>
</feature>
<feature type="modified residue" description="Phosphoserine" evidence="1">
    <location>
        <position position="481"/>
    </location>
</feature>
<feature type="modified residue" description="Phosphoserine" evidence="1">
    <location>
        <position position="485"/>
    </location>
</feature>
<feature type="modified residue" description="Phosphoserine" evidence="1">
    <location>
        <position position="494"/>
    </location>
</feature>
<feature type="modified residue" description="Phosphoserine" evidence="1">
    <location>
        <position position="498"/>
    </location>
</feature>
<feature type="modified residue" description="Phosphoserine" evidence="1">
    <location>
        <position position="521"/>
    </location>
</feature>
<feature type="modified residue" description="Phosphoserine" evidence="1">
    <location>
        <position position="529"/>
    </location>
</feature>
<feature type="modified residue" description="Phosphoserine" evidence="1">
    <location>
        <position position="557"/>
    </location>
</feature>
<feature type="modified residue" description="Phosphoserine" evidence="1">
    <location>
        <position position="561"/>
    </location>
</feature>
<feature type="modified residue" description="Phosphoserine" evidence="1">
    <location>
        <position position="579"/>
    </location>
</feature>
<feature type="modified residue" description="Phosphoserine" evidence="1">
    <location>
        <position position="597"/>
    </location>
</feature>
<feature type="modified residue" description="Phosphoserine" evidence="1">
    <location>
        <position position="600"/>
    </location>
</feature>
<feature type="modified residue" description="Phosphoserine" evidence="1">
    <location>
        <position position="607"/>
    </location>
</feature>
<feature type="modified residue" description="Phosphoserine" evidence="1">
    <location>
        <position position="616"/>
    </location>
</feature>
<feature type="modified residue" description="Phosphoserine" evidence="1">
    <location>
        <position position="624"/>
    </location>
</feature>
<feature type="modified residue" description="Phosphothreonine" evidence="1">
    <location>
        <position position="633"/>
    </location>
</feature>
<feature type="modified residue" description="Phosphoserine" evidence="1">
    <location>
        <position position="642"/>
    </location>
</feature>
<feature type="modified residue" description="Phosphoserine" evidence="1">
    <location>
        <position position="676"/>
    </location>
</feature>
<feature type="modified residue" description="Phosphoserine" evidence="1">
    <location>
        <position position="702"/>
    </location>
</feature>
<feature type="modified residue" description="Phosphoserine" evidence="1">
    <location>
        <position position="713"/>
    </location>
</feature>
<feature type="modified residue" description="Phosphoserine" evidence="1">
    <location>
        <position position="721"/>
    </location>
</feature>
<feature type="modified residue" description="Phosphoserine" evidence="1">
    <location>
        <position position="748"/>
    </location>
</feature>
<feature type="cross-link" description="Glycyl lysine isopeptide (Lys-Gly) (interchain with G-Cter in SUMO2)" evidence="1">
    <location>
        <position position="429"/>
    </location>
</feature>
<feature type="cross-link" description="Glycyl lysine isopeptide (Lys-Gly) (interchain with G-Cter in SUMO2)" evidence="1">
    <location>
        <position position="430"/>
    </location>
</feature>
<evidence type="ECO:0000250" key="1">
    <source>
        <dbReference type="UniProtKB" id="O43719"/>
    </source>
</evidence>
<evidence type="ECO:0000250" key="2">
    <source>
        <dbReference type="UniProtKB" id="Q8BGC0"/>
    </source>
</evidence>
<evidence type="ECO:0000255" key="3">
    <source>
        <dbReference type="PROSITE-ProRule" id="PRU00176"/>
    </source>
</evidence>
<evidence type="ECO:0000256" key="4">
    <source>
        <dbReference type="SAM" id="MobiDB-lite"/>
    </source>
</evidence>
<evidence type="ECO:0000305" key="5"/>
<reference key="1">
    <citation type="submission" date="2004-11" db="EMBL/GenBank/DDBJ databases">
        <authorList>
            <consortium name="The German cDNA consortium"/>
        </authorList>
    </citation>
    <scope>NUCLEOTIDE SEQUENCE [LARGE SCALE MRNA]</scope>
    <source>
        <tissue>Heart</tissue>
    </source>
</reference>
<name>HTSF1_PONAB</name>
<comment type="function">
    <text evidence="1">Component of the 17S U2 SnRNP complex of the spliceosome, a large ribonucleoprotein complex that removes introns from transcribed pre-mRNAs. The 17S U2 SnRNP complex (1) directly participates in early spliceosome assembly and (2) mediates recognition of the intron branch site during pre-mRNA splicing by promoting the selection of the pre-mRNA branch-site adenosine, the nucleophile for the first step of splicing. Within the 17S U2 SnRNP complex, HTATSF1 is required to stabilize the branchpoint-interacting stem loop. HTATSF1 is displaced from the 17S U2 SnRNP complex before the stable addition of the 17S U2 SnRNP complex to the spliceosome, destabilizing the branchpoint-interacting stem loop and allowing to probe intron branch site sequences. Also acts as a regulator of transcriptional elongation, possibly by mediating the reciprocal stimulatory effect of splicing on transcriptional elongation. Involved in double-strand break (DSB) repair via homologous recombination in S-phase by promoting the recruitment of TOPBP1 to DNA damage sites. Mechanistically, HTATSF1 is (1) recruited to DNA damage sites in S-phase via interaction with poly-ADP-ribosylated RPA1 and (2) phosphorylated by CK2, promoting recruitment of TOPBP1, thereby facilitating RAD51 nucleofilaments formation and RPA displacement, followed by homologous recombination.</text>
</comment>
<comment type="subunit">
    <text evidence="1">Component of the 17S U2 SnRNP complex, a ribonucleoprotein complex that contains small nuclear RNA (snRNA) U2 and a number of specific proteins. Within the 17S U2 SnRNP complex, interacts (via UHM region) directly with SF3B1. Component of a complex which is at least composed of HTATSF1/Tat-SF1, the P-TEFb complex components CDK9 and CCNT1, RNA polymerase II, SUPT5H, and NCL/nucleolin. Interacts with GTF2F2/RAP30 and POLR2A. Interacts with TCERG1/CA150. Interacts with (poly-ADP-ribosylated) RPA1; promoting HTATSF1 recruitment to DNA damage sites. Interacts (when phosphorylated) with TOPBP1; promoting recruitment of TOPBP1 to DNA damage sites during S-phase.</text>
</comment>
<comment type="subcellular location">
    <subcellularLocation>
        <location evidence="1">Nucleus</location>
    </subcellularLocation>
    <subcellularLocation>
        <location evidence="1">Chromosome</location>
    </subcellularLocation>
    <text evidence="1">Recruited to DNA damage sites during S-phase following interaction with poly-ADP-ribosylated RPA1.</text>
</comment>
<comment type="domain">
    <text evidence="1">The RRM domains mediate interaction with U snRNPs. The RRM domains specifically bind poly-ADP-ribosylated RPA1.</text>
</comment>
<comment type="PTM">
    <text evidence="1">Phosphorylation at Ser-748 by CK2 during S-phase in response to DNA damage promotes interaction with TOPBP1 and double-strand break (DSB) repair via homologous recombination.</text>
</comment>
<comment type="similarity">
    <text evidence="5">Belongs to the HTATSF1 family.</text>
</comment>
<sequence>MSGTNLDGNDEFDEQLRMQELYGDGKDGDTQTDAGGEPDSLGQQPTDTPYEWDLDKKAWFPKITEDFIATYQANYGFSNDGASSSTANVEDVHARTAEEPPQEKAPEPTDPRKKGEKRKAESGWFHVEEDRNTNVYVSGLPPDITVDEFIQLMSKFGIIMRDPQTEEFKVKLYKDNQGNLKGDGLCCYLKRESVELALKLLDEDEIRGYKLHVEVAKFQLKGEYDASKKKKKCKDYKKKLSMQQKQLDWRPERRAGPSRMRHERVVIIKNMFHPMDFEDDPLVLNEIREDLRVECSKFGQIRKLLLFDRHPDGVASVSFRDPEEADYCIQTLDGRWFGGRQITAQAWDGTTDYQVEETSREREERLRGWEAFLNAPEANRGLRRSDSVSASERAGPSRARHFSEHPSTSKMNAQETATGMAFEEPIDEKKFEKTEDGGEFEEGASENNAKESSPEKEAEEGCPGKESEEGCPKRGFEGSCSQKESEEGNPLRGSEEGSPKKESKKKTLRNDCEENGFAKESEDDPNKESEEEVGPTKESEEDDSEKESDEDCSEKQSEDGSEREFEENGLEKDLDEEGSEKELHENVLDKELEENDSENSEFEDDGSEKVLDEEGSEREFDEDSDEKEEEEDTYEKVFDDESNEKEDEEYADEKGLEAADKKEEEGDADEKLFEESDDKEDEDADGKEVEDADEKLFEDDDSNEKLFDEEEDSNEKLFDDSDERGTLGGFGSVEEGPLSTGSSFILSSDDDDDI</sequence>
<organism>
    <name type="scientific">Pongo abelii</name>
    <name type="common">Sumatran orangutan</name>
    <name type="synonym">Pongo pygmaeus abelii</name>
    <dbReference type="NCBI Taxonomy" id="9601"/>
    <lineage>
        <taxon>Eukaryota</taxon>
        <taxon>Metazoa</taxon>
        <taxon>Chordata</taxon>
        <taxon>Craniata</taxon>
        <taxon>Vertebrata</taxon>
        <taxon>Euteleostomi</taxon>
        <taxon>Mammalia</taxon>
        <taxon>Eutheria</taxon>
        <taxon>Euarchontoglires</taxon>
        <taxon>Primates</taxon>
        <taxon>Haplorrhini</taxon>
        <taxon>Catarrhini</taxon>
        <taxon>Hominidae</taxon>
        <taxon>Pongo</taxon>
    </lineage>
</organism>
<proteinExistence type="evidence at transcript level"/>